<protein>
    <recommendedName>
        <fullName evidence="6">2,3-bisphosphoglycerate-independent phosphoglycerate mutase</fullName>
        <shortName evidence="4">iPGM</shortName>
        <ecNumber evidence="3">5.4.2.12</ecNumber>
    </recommendedName>
    <alternativeName>
        <fullName evidence="4">Cofactor-independent phosphoglycerate mutase homolog</fullName>
    </alternativeName>
</protein>
<evidence type="ECO:0000250" key="1">
    <source>
        <dbReference type="UniProtKB" id="G5EFZ1"/>
    </source>
</evidence>
<evidence type="ECO:0000250" key="2">
    <source>
        <dbReference type="UniProtKB" id="Q9X519"/>
    </source>
</evidence>
<evidence type="ECO:0000269" key="3">
    <source>
    </source>
</evidence>
<evidence type="ECO:0000303" key="4">
    <source>
    </source>
</evidence>
<evidence type="ECO:0000305" key="5"/>
<evidence type="ECO:0000305" key="6">
    <source>
    </source>
</evidence>
<evidence type="ECO:0000312" key="7">
    <source>
        <dbReference type="EMBL" id="AAV33247.1"/>
    </source>
</evidence>
<keyword id="KW-0324">Glycolysis</keyword>
<keyword id="KW-0413">Isomerase</keyword>
<keyword id="KW-0460">Magnesium</keyword>
<keyword id="KW-0464">Manganese</keyword>
<keyword id="KW-0479">Metal-binding</keyword>
<keyword id="KW-1185">Reference proteome</keyword>
<reference evidence="5" key="1">
    <citation type="journal article" date="2007" name="Mol. Biochem. Parasitol.">
        <title>Molecular and biochemical characterization of nematode cofactor independent phosphoglycerate mutases.</title>
        <authorList>
            <person name="Raverdy S."/>
            <person name="Zhang Y."/>
            <person name="Foster J."/>
            <person name="Carlow C.K."/>
        </authorList>
    </citation>
    <scope>NUCLEOTIDE SEQUENCE [MRNA]</scope>
    <scope>FUNCTION</scope>
    <scope>CATALYTIC ACTIVITY</scope>
    <scope>COFACTOR</scope>
    <scope>ACTIVITY REGULATION</scope>
    <scope>BIOPHYSICOCHEMICAL PROPERTIES</scope>
    <scope>PATHWAY</scope>
</reference>
<organism evidence="7">
    <name type="scientific">Onchocerca volvulus</name>
    <dbReference type="NCBI Taxonomy" id="6282"/>
    <lineage>
        <taxon>Eukaryota</taxon>
        <taxon>Metazoa</taxon>
        <taxon>Ecdysozoa</taxon>
        <taxon>Nematoda</taxon>
        <taxon>Chromadorea</taxon>
        <taxon>Rhabditida</taxon>
        <taxon>Spirurina</taxon>
        <taxon>Spiruromorpha</taxon>
        <taxon>Filarioidea</taxon>
        <taxon>Onchocercidae</taxon>
        <taxon>Onchocerca</taxon>
    </lineage>
</organism>
<name>GPMI_ONCVO</name>
<proteinExistence type="evidence at protein level"/>
<dbReference type="EC" id="5.4.2.12" evidence="3"/>
<dbReference type="EMBL" id="AY640434">
    <property type="protein sequence ID" value="AAV33247.1"/>
    <property type="molecule type" value="mRNA"/>
</dbReference>
<dbReference type="SMR" id="I6LDA6"/>
<dbReference type="STRING" id="6282.I6LDA6"/>
<dbReference type="HOGENOM" id="CLU_026099_2_0_1"/>
<dbReference type="UniPathway" id="UPA00109">
    <property type="reaction ID" value="UER00186"/>
</dbReference>
<dbReference type="Proteomes" id="UP000024404">
    <property type="component" value="Unassembled WGS sequence"/>
</dbReference>
<dbReference type="GO" id="GO:0005737">
    <property type="term" value="C:cytoplasm"/>
    <property type="evidence" value="ECO:0007669"/>
    <property type="project" value="InterPro"/>
</dbReference>
<dbReference type="GO" id="GO:0030145">
    <property type="term" value="F:manganese ion binding"/>
    <property type="evidence" value="ECO:0007669"/>
    <property type="project" value="InterPro"/>
</dbReference>
<dbReference type="GO" id="GO:0004619">
    <property type="term" value="F:phosphoglycerate mutase activity"/>
    <property type="evidence" value="ECO:0007669"/>
    <property type="project" value="UniProtKB-EC"/>
</dbReference>
<dbReference type="GO" id="GO:0006007">
    <property type="term" value="P:glucose catabolic process"/>
    <property type="evidence" value="ECO:0007669"/>
    <property type="project" value="InterPro"/>
</dbReference>
<dbReference type="GO" id="GO:0006096">
    <property type="term" value="P:glycolytic process"/>
    <property type="evidence" value="ECO:0007669"/>
    <property type="project" value="UniProtKB-UniPathway"/>
</dbReference>
<dbReference type="CDD" id="cd16010">
    <property type="entry name" value="iPGM"/>
    <property type="match status" value="1"/>
</dbReference>
<dbReference type="FunFam" id="3.40.1450.10:FF:000001">
    <property type="entry name" value="2,3-bisphosphoglycerate-independent phosphoglycerate mutase"/>
    <property type="match status" value="1"/>
</dbReference>
<dbReference type="Gene3D" id="3.40.720.10">
    <property type="entry name" value="Alkaline Phosphatase, subunit A"/>
    <property type="match status" value="1"/>
</dbReference>
<dbReference type="Gene3D" id="3.40.1450.10">
    <property type="entry name" value="BPG-independent phosphoglycerate mutase, domain B"/>
    <property type="match status" value="1"/>
</dbReference>
<dbReference type="HAMAP" id="MF_01038">
    <property type="entry name" value="GpmI"/>
    <property type="match status" value="1"/>
</dbReference>
<dbReference type="InterPro" id="IPR017850">
    <property type="entry name" value="Alkaline_phosphatase_core_sf"/>
</dbReference>
<dbReference type="InterPro" id="IPR011258">
    <property type="entry name" value="BPG-indep_PGM_N"/>
</dbReference>
<dbReference type="InterPro" id="IPR006124">
    <property type="entry name" value="Metalloenzyme"/>
</dbReference>
<dbReference type="InterPro" id="IPR036646">
    <property type="entry name" value="PGAM_B_sf"/>
</dbReference>
<dbReference type="InterPro" id="IPR005995">
    <property type="entry name" value="Pgm_bpd_ind"/>
</dbReference>
<dbReference type="NCBIfam" id="TIGR01307">
    <property type="entry name" value="pgm_bpd_ind"/>
    <property type="match status" value="1"/>
</dbReference>
<dbReference type="PANTHER" id="PTHR31637">
    <property type="entry name" value="2,3-BISPHOSPHOGLYCERATE-INDEPENDENT PHOSPHOGLYCERATE MUTASE"/>
    <property type="match status" value="1"/>
</dbReference>
<dbReference type="PANTHER" id="PTHR31637:SF0">
    <property type="entry name" value="2,3-BISPHOSPHOGLYCERATE-INDEPENDENT PHOSPHOGLYCERATE MUTASE"/>
    <property type="match status" value="1"/>
</dbReference>
<dbReference type="Pfam" id="PF06415">
    <property type="entry name" value="iPGM_N"/>
    <property type="match status" value="1"/>
</dbReference>
<dbReference type="Pfam" id="PF01676">
    <property type="entry name" value="Metalloenzyme"/>
    <property type="match status" value="1"/>
</dbReference>
<dbReference type="PIRSF" id="PIRSF001492">
    <property type="entry name" value="IPGAM"/>
    <property type="match status" value="1"/>
</dbReference>
<dbReference type="SUPFAM" id="SSF64158">
    <property type="entry name" value="2,3-Bisphosphoglycerate-independent phosphoglycerate mutase, substrate-binding domain"/>
    <property type="match status" value="1"/>
</dbReference>
<dbReference type="SUPFAM" id="SSF53649">
    <property type="entry name" value="Alkaline phosphatase-like"/>
    <property type="match status" value="1"/>
</dbReference>
<gene>
    <name evidence="1" type="primary">ipgm-1</name>
</gene>
<accession>I6LDA6</accession>
<sequence length="515" mass="57217">MSEVKNRVCLVVIDGWGISNESKGNAILNAKTPVMDELCALNSHPIEAHGLHVGLPEGLMGNSEVGHLNIGAGRVVYQDIVRINLAVKNKTLVENKHLKEAAERAIKGNGRIHLCGLVSDGGVHSHIDHLFALITALKQLKVPQLYIHFFGDGRDTSPTSGVGFLQQLIDFVNKEQYGEIATIVGRYYAMDRDKRWERIRVCYDALIAGVGEKTTIDKAIDVIKGRYAKDETDEFLKPIILSDKGRTKDGDTLIFFDYRADRMREITECMGMERYKDLKSDIKHPKDMQVIGMTQYKAEFTFPALFPPESHKNVLAEWLSVKGLTQFHCAETEKYAHVTFFFNGGVEKQFENEERCLVPSPKVATYDLEPAMSSAGVADKMIEQLNRKAHAFIMCNFAPPDMVGHTGVYEAAVKAVEATDIAIGRIYEACKKNDYVLMVTADHGNAEKMIAPDGGKHTAHTCNLVPFTCSSLKFKFMDKLPDREMALCDVAPTVLKVLGLPLPSEMTGKPVVIEV</sequence>
<feature type="chain" id="PRO_0000431788" description="2,3-bisphosphoglycerate-independent phosphoglycerate mutase" evidence="5">
    <location>
        <begin position="1"/>
        <end position="515"/>
    </location>
</feature>
<feature type="active site" evidence="2">
    <location>
        <position position="63"/>
    </location>
</feature>
<feature type="binding site" evidence="2">
    <location>
        <position position="14"/>
    </location>
    <ligand>
        <name>Mn(2+)</name>
        <dbReference type="ChEBI" id="CHEBI:29035"/>
        <label>2</label>
    </ligand>
</feature>
<feature type="binding site" evidence="2">
    <location>
        <position position="63"/>
    </location>
    <ligand>
        <name>Mn(2+)</name>
        <dbReference type="ChEBI" id="CHEBI:29035"/>
        <label>2</label>
    </ligand>
</feature>
<feature type="binding site" evidence="2">
    <location>
        <position position="124"/>
    </location>
    <ligand>
        <name>substrate</name>
    </ligand>
</feature>
<feature type="binding site" evidence="2">
    <location>
        <begin position="154"/>
        <end position="155"/>
    </location>
    <ligand>
        <name>substrate</name>
    </ligand>
</feature>
<feature type="binding site" evidence="2">
    <location>
        <position position="186"/>
    </location>
    <ligand>
        <name>substrate</name>
    </ligand>
</feature>
<feature type="binding site" evidence="2">
    <location>
        <position position="192"/>
    </location>
    <ligand>
        <name>substrate</name>
    </ligand>
</feature>
<feature type="binding site" evidence="2">
    <location>
        <begin position="259"/>
        <end position="262"/>
    </location>
    <ligand>
        <name>substrate</name>
    </ligand>
</feature>
<feature type="binding site" evidence="2">
    <location>
        <position position="334"/>
    </location>
    <ligand>
        <name>substrate</name>
    </ligand>
</feature>
<feature type="binding site" evidence="2">
    <location>
        <position position="401"/>
    </location>
    <ligand>
        <name>Mn(2+)</name>
        <dbReference type="ChEBI" id="CHEBI:29035"/>
        <label>1</label>
    </ligand>
</feature>
<feature type="binding site" evidence="2">
    <location>
        <position position="405"/>
    </location>
    <ligand>
        <name>Mn(2+)</name>
        <dbReference type="ChEBI" id="CHEBI:29035"/>
        <label>1</label>
    </ligand>
</feature>
<feature type="binding site" evidence="2">
    <location>
        <position position="442"/>
    </location>
    <ligand>
        <name>Mn(2+)</name>
        <dbReference type="ChEBI" id="CHEBI:29035"/>
        <label>2</label>
    </ligand>
</feature>
<feature type="binding site" evidence="2">
    <location>
        <position position="443"/>
    </location>
    <ligand>
        <name>Mn(2+)</name>
        <dbReference type="ChEBI" id="CHEBI:29035"/>
        <label>2</label>
    </ligand>
</feature>
<feature type="binding site" evidence="2">
    <location>
        <position position="460"/>
    </location>
    <ligand>
        <name>Mn(2+)</name>
        <dbReference type="ChEBI" id="CHEBI:29035"/>
        <label>1</label>
    </ligand>
</feature>
<comment type="function">
    <text evidence="3">Catalyzes the interconversion of 2-phosphoglycerate and 3-phosphoglycerate.</text>
</comment>
<comment type="catalytic activity">
    <reaction evidence="3">
        <text>(2R)-2-phosphoglycerate = (2R)-3-phosphoglycerate</text>
        <dbReference type="Rhea" id="RHEA:15901"/>
        <dbReference type="ChEBI" id="CHEBI:58272"/>
        <dbReference type="ChEBI" id="CHEBI:58289"/>
        <dbReference type="EC" id="5.4.2.12"/>
    </reaction>
</comment>
<comment type="cofactor">
    <cofactor evidence="3">
        <name>Mg(2+)</name>
        <dbReference type="ChEBI" id="CHEBI:18420"/>
    </cofactor>
    <cofactor evidence="3">
        <name>Mn(2+)</name>
        <dbReference type="ChEBI" id="CHEBI:29035"/>
    </cofactor>
    <text evidence="2 3">Binds 2 manganese or magnesium ions per subunit (By similarity). Cobalt and nickel are less efficient (PubMed:17897734).</text>
</comment>
<comment type="activity regulation">
    <text evidence="3">Activity is not affected by 2,3-bisphosphoglycerate.</text>
</comment>
<comment type="biophysicochemical properties">
    <kinetics>
        <KM evidence="3">0.301 mM for 3-phosphoglycerate</KM>
    </kinetics>
    <phDependence>
        <text evidence="3">Optimum pH is 7.5-8.5.</text>
    </phDependence>
    <temperatureDependence>
        <text evidence="3">Optimum temperature is 32 degrees Celsius. Active between 17 and 32 degrees Celsius.</text>
    </temperatureDependence>
</comment>
<comment type="pathway">
    <text evidence="6">Carbohydrate degradation; glycolysis; pyruvate from D-glyceraldehyde 3-phosphate: step 3/5.</text>
</comment>
<comment type="similarity">
    <text evidence="5">Belongs to the BPG-independent phosphoglycerate mutase family.</text>
</comment>